<organism>
    <name type="scientific">Arabidopsis thaliana</name>
    <name type="common">Mouse-ear cress</name>
    <dbReference type="NCBI Taxonomy" id="3702"/>
    <lineage>
        <taxon>Eukaryota</taxon>
        <taxon>Viridiplantae</taxon>
        <taxon>Streptophyta</taxon>
        <taxon>Embryophyta</taxon>
        <taxon>Tracheophyta</taxon>
        <taxon>Spermatophyta</taxon>
        <taxon>Magnoliopsida</taxon>
        <taxon>eudicotyledons</taxon>
        <taxon>Gunneridae</taxon>
        <taxon>Pentapetalae</taxon>
        <taxon>rosids</taxon>
        <taxon>malvids</taxon>
        <taxon>Brassicales</taxon>
        <taxon>Brassicaceae</taxon>
        <taxon>Camelineae</taxon>
        <taxon>Arabidopsis</taxon>
    </lineage>
</organism>
<dbReference type="EMBL" id="AB018113">
    <property type="protein sequence ID" value="BAB09165.1"/>
    <property type="status" value="ALT_SEQ"/>
    <property type="molecule type" value="Genomic_DNA"/>
</dbReference>
<dbReference type="EMBL" id="CP002688">
    <property type="protein sequence ID" value="AED95239.1"/>
    <property type="molecule type" value="Genomic_DNA"/>
</dbReference>
<dbReference type="EMBL" id="CP002688">
    <property type="protein sequence ID" value="AED95240.1"/>
    <property type="molecule type" value="Genomic_DNA"/>
</dbReference>
<dbReference type="EMBL" id="CP002688">
    <property type="protein sequence ID" value="AED95241.1"/>
    <property type="molecule type" value="Genomic_DNA"/>
</dbReference>
<dbReference type="EMBL" id="CP002688">
    <property type="protein sequence ID" value="ANM69280.1"/>
    <property type="molecule type" value="Genomic_DNA"/>
</dbReference>
<dbReference type="EMBL" id="AK119116">
    <property type="protein sequence ID" value="BAC43687.1"/>
    <property type="molecule type" value="mRNA"/>
</dbReference>
<dbReference type="EMBL" id="BT029540">
    <property type="protein sequence ID" value="ABL66796.1"/>
    <property type="molecule type" value="mRNA"/>
</dbReference>
<dbReference type="RefSeq" id="NP_001330972.1">
    <molecule id="F4KD68-1"/>
    <property type="nucleotide sequence ID" value="NM_001344615.1"/>
</dbReference>
<dbReference type="RefSeq" id="NP_199350.2">
    <molecule id="F4KD68-2"/>
    <property type="nucleotide sequence ID" value="NM_123905.2"/>
</dbReference>
<dbReference type="RefSeq" id="NP_974887.1">
    <molecule id="F4KD68-1"/>
    <property type="nucleotide sequence ID" value="NM_203158.2"/>
</dbReference>
<dbReference type="RefSeq" id="NP_974888.1">
    <molecule id="F4KD68-3"/>
    <property type="nucleotide sequence ID" value="NM_203159.1"/>
</dbReference>
<dbReference type="SMR" id="F4KD68"/>
<dbReference type="FunCoup" id="F4KD68">
    <property type="interactions" value="15"/>
</dbReference>
<dbReference type="STRING" id="3702.F4KD68"/>
<dbReference type="PaxDb" id="3702-AT5G45370.2"/>
<dbReference type="ProteomicsDB" id="242553">
    <molecule id="F4KD68-1"/>
</dbReference>
<dbReference type="EnsemblPlants" id="AT5G45370.1">
    <molecule id="F4KD68-2"/>
    <property type="protein sequence ID" value="AT5G45370.1"/>
    <property type="gene ID" value="AT5G45370"/>
</dbReference>
<dbReference type="EnsemblPlants" id="AT5G45370.2">
    <molecule id="F4KD68-1"/>
    <property type="protein sequence ID" value="AT5G45370.2"/>
    <property type="gene ID" value="AT5G45370"/>
</dbReference>
<dbReference type="EnsemblPlants" id="AT5G45370.3">
    <molecule id="F4KD68-3"/>
    <property type="protein sequence ID" value="AT5G45370.3"/>
    <property type="gene ID" value="AT5G45370"/>
</dbReference>
<dbReference type="EnsemblPlants" id="AT5G45370.4">
    <molecule id="F4KD68-1"/>
    <property type="protein sequence ID" value="AT5G45370.4"/>
    <property type="gene ID" value="AT5G45370"/>
</dbReference>
<dbReference type="GeneID" id="834573"/>
<dbReference type="Gramene" id="AT5G45370.1">
    <molecule id="F4KD68-2"/>
    <property type="protein sequence ID" value="AT5G45370.1"/>
    <property type="gene ID" value="AT5G45370"/>
</dbReference>
<dbReference type="Gramene" id="AT5G45370.2">
    <molecule id="F4KD68-1"/>
    <property type="protein sequence ID" value="AT5G45370.2"/>
    <property type="gene ID" value="AT5G45370"/>
</dbReference>
<dbReference type="Gramene" id="AT5G45370.3">
    <molecule id="F4KD68-3"/>
    <property type="protein sequence ID" value="AT5G45370.3"/>
    <property type="gene ID" value="AT5G45370"/>
</dbReference>
<dbReference type="Gramene" id="AT5G45370.4">
    <molecule id="F4KD68-1"/>
    <property type="protein sequence ID" value="AT5G45370.4"/>
    <property type="gene ID" value="AT5G45370"/>
</dbReference>
<dbReference type="KEGG" id="ath:AT5G45370"/>
<dbReference type="Araport" id="AT5G45370"/>
<dbReference type="TAIR" id="AT5G45370">
    <property type="gene designation" value="UMAMIT1"/>
</dbReference>
<dbReference type="eggNOG" id="ENOG502QUHA">
    <property type="taxonomic scope" value="Eukaryota"/>
</dbReference>
<dbReference type="InParanoid" id="F4KD68"/>
<dbReference type="OMA" id="VMPAMSQ"/>
<dbReference type="PRO" id="PR:F4KD68"/>
<dbReference type="Proteomes" id="UP000006548">
    <property type="component" value="Chromosome 5"/>
</dbReference>
<dbReference type="ExpressionAtlas" id="F4KD68">
    <property type="expression patterns" value="baseline and differential"/>
</dbReference>
<dbReference type="GO" id="GO:0016020">
    <property type="term" value="C:membrane"/>
    <property type="evidence" value="ECO:0007669"/>
    <property type="project" value="UniProtKB-SubCell"/>
</dbReference>
<dbReference type="GO" id="GO:0022857">
    <property type="term" value="F:transmembrane transporter activity"/>
    <property type="evidence" value="ECO:0007669"/>
    <property type="project" value="InterPro"/>
</dbReference>
<dbReference type="InterPro" id="IPR000620">
    <property type="entry name" value="EamA_dom"/>
</dbReference>
<dbReference type="InterPro" id="IPR030184">
    <property type="entry name" value="WAT1-related"/>
</dbReference>
<dbReference type="PANTHER" id="PTHR31218">
    <property type="entry name" value="WAT1-RELATED PROTEIN"/>
    <property type="match status" value="1"/>
</dbReference>
<dbReference type="Pfam" id="PF00892">
    <property type="entry name" value="EamA"/>
    <property type="match status" value="2"/>
</dbReference>
<dbReference type="SUPFAM" id="SSF103481">
    <property type="entry name" value="Multidrug resistance efflux transporter EmrE"/>
    <property type="match status" value="2"/>
</dbReference>
<feature type="chain" id="PRO_0000421350" description="WAT1-related protein At5g45370">
    <location>
        <begin position="1"/>
        <end position="381"/>
    </location>
</feature>
<feature type="transmembrane region" description="Helical" evidence="2">
    <location>
        <begin position="26"/>
        <end position="46"/>
    </location>
</feature>
<feature type="transmembrane region" description="Helical" evidence="2">
    <location>
        <begin position="49"/>
        <end position="69"/>
    </location>
</feature>
<feature type="transmembrane region" description="Helical" evidence="2">
    <location>
        <begin position="82"/>
        <end position="102"/>
    </location>
</feature>
<feature type="transmembrane region" description="Helical" evidence="2">
    <location>
        <begin position="112"/>
        <end position="132"/>
    </location>
</feature>
<feature type="transmembrane region" description="Helical" evidence="2">
    <location>
        <begin position="151"/>
        <end position="171"/>
    </location>
</feature>
<feature type="transmembrane region" description="Helical" evidence="2">
    <location>
        <begin position="206"/>
        <end position="226"/>
    </location>
</feature>
<feature type="transmembrane region" description="Helical" evidence="2">
    <location>
        <begin position="240"/>
        <end position="260"/>
    </location>
</feature>
<feature type="transmembrane region" description="Helical" evidence="2">
    <location>
        <begin position="273"/>
        <end position="293"/>
    </location>
</feature>
<feature type="transmembrane region" description="Helical" evidence="2">
    <location>
        <begin position="297"/>
        <end position="317"/>
    </location>
</feature>
<feature type="transmembrane region" description="Helical" evidence="2">
    <location>
        <begin position="320"/>
        <end position="340"/>
    </location>
</feature>
<feature type="domain" description="EamA 1">
    <location>
        <begin position="31"/>
        <end position="143"/>
    </location>
</feature>
<feature type="domain" description="EamA 2">
    <location>
        <begin position="225"/>
        <end position="345"/>
    </location>
</feature>
<feature type="splice variant" id="VSP_045518" description="In isoform 3." evidence="4">
    <original>RTIRPPMNRSIFFSLFFLGLAGIFGNQLLFLMGLSYTNPTYAAAIQPSIPVFTFLLAVLMG</original>
    <variation>S</variation>
    <location>
        <begin position="72"/>
        <end position="132"/>
    </location>
</feature>
<feature type="splice variant" id="VSP_045519" description="In isoform 2." evidence="3">
    <location>
        <begin position="171"/>
        <end position="194"/>
    </location>
</feature>
<feature type="sequence conflict" description="In Ref. 4; ABL66796." evidence="4" ref="4">
    <original>DETG</original>
    <variation>QFSS</variation>
    <location>
        <begin position="377"/>
        <end position="380"/>
    </location>
</feature>
<keyword id="KW-0025">Alternative splicing</keyword>
<keyword id="KW-0472">Membrane</keyword>
<keyword id="KW-1185">Reference proteome</keyword>
<keyword id="KW-0677">Repeat</keyword>
<keyword id="KW-0812">Transmembrane</keyword>
<keyword id="KW-1133">Transmembrane helix</keyword>
<gene>
    <name type="ordered locus">At5g45370</name>
    <name type="ORF">MFC19.4</name>
</gene>
<evidence type="ECO:0000250" key="1"/>
<evidence type="ECO:0000255" key="2"/>
<evidence type="ECO:0000303" key="3">
    <source>
    </source>
</evidence>
<evidence type="ECO:0000305" key="4"/>
<reference key="1">
    <citation type="journal article" date="1999" name="DNA Res.">
        <title>Structural analysis of Arabidopsis thaliana chromosome 5. IX. Sequence features of the regions of 1,011,550 bp covered by seventeen P1 and TAC clones.</title>
        <authorList>
            <person name="Kaneko T."/>
            <person name="Katoh T."/>
            <person name="Sato S."/>
            <person name="Nakamura Y."/>
            <person name="Asamizu E."/>
            <person name="Kotani H."/>
            <person name="Miyajima N."/>
            <person name="Tabata S."/>
        </authorList>
    </citation>
    <scope>NUCLEOTIDE SEQUENCE [LARGE SCALE GENOMIC DNA]</scope>
    <source>
        <strain>cv. Columbia</strain>
    </source>
</reference>
<reference key="2">
    <citation type="journal article" date="2017" name="Plant J.">
        <title>Araport11: a complete reannotation of the Arabidopsis thaliana reference genome.</title>
        <authorList>
            <person name="Cheng C.Y."/>
            <person name="Krishnakumar V."/>
            <person name="Chan A.P."/>
            <person name="Thibaud-Nissen F."/>
            <person name="Schobel S."/>
            <person name="Town C.D."/>
        </authorList>
    </citation>
    <scope>GENOME REANNOTATION</scope>
    <source>
        <strain>cv. Columbia</strain>
    </source>
</reference>
<reference key="3">
    <citation type="journal article" date="2002" name="Science">
        <title>Functional annotation of a full-length Arabidopsis cDNA collection.</title>
        <authorList>
            <person name="Seki M."/>
            <person name="Narusaka M."/>
            <person name="Kamiya A."/>
            <person name="Ishida J."/>
            <person name="Satou M."/>
            <person name="Sakurai T."/>
            <person name="Nakajima M."/>
            <person name="Enju A."/>
            <person name="Akiyama K."/>
            <person name="Oono Y."/>
            <person name="Muramatsu M."/>
            <person name="Hayashizaki Y."/>
            <person name="Kawai J."/>
            <person name="Carninci P."/>
            <person name="Itoh M."/>
            <person name="Ishii Y."/>
            <person name="Arakawa T."/>
            <person name="Shibata K."/>
            <person name="Shinagawa A."/>
            <person name="Shinozaki K."/>
        </authorList>
    </citation>
    <scope>NUCLEOTIDE SEQUENCE [LARGE SCALE MRNA] (ISOFORM 2)</scope>
    <source>
        <strain>cv. Columbia</strain>
    </source>
</reference>
<reference key="4">
    <citation type="submission" date="2006-12" db="EMBL/GenBank/DDBJ databases">
        <title>Arabidopsis ORF clones.</title>
        <authorList>
            <person name="Bautista V.R."/>
            <person name="Kim C.J."/>
            <person name="Chen H."/>
            <person name="Quinitio C."/>
            <person name="Ecker J.R."/>
        </authorList>
    </citation>
    <scope>NUCLEOTIDE SEQUENCE [LARGE SCALE MRNA] (ISOFORM 1)</scope>
    <source>
        <strain>cv. Columbia</strain>
    </source>
</reference>
<sequence>MAAPAILNGGDATERETRMAHSAMTLVQVINGGYHVVTKVALNVGVNQLVFCVFRDLLALSILAPLAFFRERTIRPPMNRSIFFSLFFLGLAGIFGNQLLFLMGLSYTNPTYAAAIQPSIPVFTFLLAVLMGTEKVNLLKVEGQTKVGGTLVCVSGAIAMALFRGPALFGGKDAADSVKSVIIDRSQPELNGWLVSSFLGLGFDQWHIGVLCLIGNCMCMAAFLAVQAPVLKKYPAYLSVAAYSYFFGASIMITTAILFVREPKDWSLTQSEVLAVIFAGVFASALNYGLLTWSNKILGAALVSLYNPLQPATSAFLSTIFLGSPIYLGSVLGGILIICGLYMVTWASYREQQTTSAGNEIASSSDVRISEPFIYRDETGK</sequence>
<proteinExistence type="evidence at transcript level"/>
<accession>F4KD68</accession>
<accession>A1A6M0</accession>
<accession>F4KD70</accession>
<accession>Q8GW30</accession>
<accession>Q9FHJ9</accession>
<protein>
    <recommendedName>
        <fullName>WAT1-related protein At5g45370</fullName>
    </recommendedName>
</protein>
<name>WTR43_ARATH</name>
<comment type="subcellular location">
    <subcellularLocation>
        <location evidence="1">Membrane</location>
        <topology evidence="4">Multi-pass membrane protein</topology>
    </subcellularLocation>
</comment>
<comment type="alternative products">
    <event type="alternative splicing"/>
    <isoform>
        <id>F4KD68-1</id>
        <name>1</name>
        <sequence type="displayed"/>
    </isoform>
    <isoform>
        <id>F4KD68-2</id>
        <name>2</name>
        <sequence type="described" ref="VSP_045519"/>
    </isoform>
    <isoform>
        <id>F4KD68-3</id>
        <name>3</name>
        <sequence type="described" ref="VSP_045518"/>
    </isoform>
</comment>
<comment type="similarity">
    <text evidence="4">Belongs to the drug/metabolite transporter (DMT) superfamily. Plant drug/metabolite exporter (P-DME) (TC 2.A.7.4) family.</text>
</comment>
<comment type="sequence caution" evidence="4">
    <conflict type="erroneous gene model prediction">
        <sequence resource="EMBL-CDS" id="BAB09165"/>
    </conflict>
</comment>